<organism>
    <name type="scientific">Halalkalibacterium halodurans (strain ATCC BAA-125 / DSM 18197 / FERM 7344 / JCM 9153 / C-125)</name>
    <name type="common">Bacillus halodurans</name>
    <dbReference type="NCBI Taxonomy" id="272558"/>
    <lineage>
        <taxon>Bacteria</taxon>
        <taxon>Bacillati</taxon>
        <taxon>Bacillota</taxon>
        <taxon>Bacilli</taxon>
        <taxon>Bacillales</taxon>
        <taxon>Bacillaceae</taxon>
        <taxon>Halalkalibacterium (ex Joshi et al. 2022)</taxon>
    </lineage>
</organism>
<evidence type="ECO:0000255" key="1">
    <source>
        <dbReference type="HAMAP-Rule" id="MF_00829"/>
    </source>
</evidence>
<feature type="chain" id="PRO_0000291404" description="UPF0435 protein BH2488">
    <location>
        <begin position="1"/>
        <end position="73"/>
    </location>
</feature>
<keyword id="KW-1185">Reference proteome</keyword>
<dbReference type="EMBL" id="BA000004">
    <property type="protein sequence ID" value="BAB06207.1"/>
    <property type="molecule type" value="Genomic_DNA"/>
</dbReference>
<dbReference type="PIR" id="H83960">
    <property type="entry name" value="H83960"/>
</dbReference>
<dbReference type="RefSeq" id="WP_010898639.1">
    <property type="nucleotide sequence ID" value="NC_002570.2"/>
</dbReference>
<dbReference type="SMR" id="Q9KA06"/>
<dbReference type="STRING" id="272558.gene:10728386"/>
<dbReference type="GeneID" id="87598007"/>
<dbReference type="KEGG" id="bha:BH2488"/>
<dbReference type="eggNOG" id="COG4840">
    <property type="taxonomic scope" value="Bacteria"/>
</dbReference>
<dbReference type="HOGENOM" id="CLU_199533_1_0_9"/>
<dbReference type="OrthoDB" id="2361695at2"/>
<dbReference type="Proteomes" id="UP000001258">
    <property type="component" value="Chromosome"/>
</dbReference>
<dbReference type="HAMAP" id="MF_00829">
    <property type="entry name" value="UPF0435"/>
    <property type="match status" value="1"/>
</dbReference>
<dbReference type="InterPro" id="IPR009507">
    <property type="entry name" value="UPF0435"/>
</dbReference>
<dbReference type="Pfam" id="PF06569">
    <property type="entry name" value="DUF1128"/>
    <property type="match status" value="1"/>
</dbReference>
<accession>Q9KA06</accession>
<name>Y2488_HALH5</name>
<gene>
    <name type="ordered locus">BH2488</name>
</gene>
<proteinExistence type="inferred from homology"/>
<reference key="1">
    <citation type="journal article" date="2000" name="Nucleic Acids Res.">
        <title>Complete genome sequence of the alkaliphilic bacterium Bacillus halodurans and genomic sequence comparison with Bacillus subtilis.</title>
        <authorList>
            <person name="Takami H."/>
            <person name="Nakasone K."/>
            <person name="Takaki Y."/>
            <person name="Maeno G."/>
            <person name="Sasaki R."/>
            <person name="Masui N."/>
            <person name="Fuji F."/>
            <person name="Hirama C."/>
            <person name="Nakamura Y."/>
            <person name="Ogasawara N."/>
            <person name="Kuhara S."/>
            <person name="Horikoshi K."/>
        </authorList>
    </citation>
    <scope>NUCLEOTIDE SEQUENCE [LARGE SCALE GENOMIC DNA]</scope>
    <source>
        <strain>ATCC BAA-125 / DSM 18197 / FERM 7344 / JCM 9153 / C-125</strain>
    </source>
</reference>
<protein>
    <recommendedName>
        <fullName evidence="1">UPF0435 protein BH2488</fullName>
    </recommendedName>
</protein>
<sequence>MNLNEESRENVVFMIEEIKKKLQVVNGSVLNPDSVDMSRYEDLRDIYDMIKKKNNFSVSEMDAIAVELGRLRK</sequence>
<comment type="similarity">
    <text evidence="1">Belongs to the UPF0435 family.</text>
</comment>